<proteinExistence type="inferred from homology"/>
<keyword id="KW-0963">Cytoplasm</keyword>
<keyword id="KW-0251">Elongation factor</keyword>
<keyword id="KW-0648">Protein biosynthesis</keyword>
<sequence length="188" mass="20654">MAQTTNDIKNGSVLNLDGQLWTVMKFQHVKPGKGPAFVRTTIKNVLSGKIVDKTFNAGMKMEFETVDNRTLQYSYEDGDNFVFMDMTTYDQIMVPKTLLGDKAKFLLEGTDCLVSFHDGTPLSVDLPGSVVLTITHTEPGLQGNRSNAGTKPATVETGAEIQVPLFINEGDRVKINTEDGSYTGRENN</sequence>
<gene>
    <name evidence="1" type="primary">efp</name>
    <name type="ordered locus">Blon_0735</name>
    <name type="ordered locus">BLIJ_0747</name>
</gene>
<dbReference type="EMBL" id="CP001095">
    <property type="protein sequence ID" value="ACJ51839.1"/>
    <property type="molecule type" value="Genomic_DNA"/>
</dbReference>
<dbReference type="EMBL" id="AP010889">
    <property type="protein sequence ID" value="BAJ68339.1"/>
    <property type="molecule type" value="Genomic_DNA"/>
</dbReference>
<dbReference type="RefSeq" id="WP_007056944.1">
    <property type="nucleotide sequence ID" value="NZ_JDTT01000007.1"/>
</dbReference>
<dbReference type="SMR" id="B7GPV9"/>
<dbReference type="GeneID" id="69578602"/>
<dbReference type="KEGG" id="bln:Blon_0735"/>
<dbReference type="KEGG" id="blon:BLIJ_0747"/>
<dbReference type="PATRIC" id="fig|391904.8.peg.751"/>
<dbReference type="HOGENOM" id="CLU_074944_0_1_11"/>
<dbReference type="UniPathway" id="UPA00345"/>
<dbReference type="Proteomes" id="UP000001360">
    <property type="component" value="Chromosome"/>
</dbReference>
<dbReference type="GO" id="GO:0005737">
    <property type="term" value="C:cytoplasm"/>
    <property type="evidence" value="ECO:0007669"/>
    <property type="project" value="UniProtKB-SubCell"/>
</dbReference>
<dbReference type="GO" id="GO:0003746">
    <property type="term" value="F:translation elongation factor activity"/>
    <property type="evidence" value="ECO:0007669"/>
    <property type="project" value="UniProtKB-UniRule"/>
</dbReference>
<dbReference type="GO" id="GO:0043043">
    <property type="term" value="P:peptide biosynthetic process"/>
    <property type="evidence" value="ECO:0007669"/>
    <property type="project" value="InterPro"/>
</dbReference>
<dbReference type="CDD" id="cd04470">
    <property type="entry name" value="S1_EF-P_repeat_1"/>
    <property type="match status" value="1"/>
</dbReference>
<dbReference type="CDD" id="cd05794">
    <property type="entry name" value="S1_EF-P_repeat_2"/>
    <property type="match status" value="1"/>
</dbReference>
<dbReference type="FunFam" id="2.30.30.30:FF:000003">
    <property type="entry name" value="Elongation factor P"/>
    <property type="match status" value="1"/>
</dbReference>
<dbReference type="FunFam" id="2.40.50.140:FF:000004">
    <property type="entry name" value="Elongation factor P"/>
    <property type="match status" value="1"/>
</dbReference>
<dbReference type="FunFam" id="2.40.50.140:FF:000009">
    <property type="entry name" value="Elongation factor P"/>
    <property type="match status" value="1"/>
</dbReference>
<dbReference type="Gene3D" id="2.30.30.30">
    <property type="match status" value="1"/>
</dbReference>
<dbReference type="Gene3D" id="2.40.50.140">
    <property type="entry name" value="Nucleic acid-binding proteins"/>
    <property type="match status" value="2"/>
</dbReference>
<dbReference type="HAMAP" id="MF_00141">
    <property type="entry name" value="EF_P"/>
    <property type="match status" value="1"/>
</dbReference>
<dbReference type="InterPro" id="IPR015365">
    <property type="entry name" value="Elong-fact-P_C"/>
</dbReference>
<dbReference type="InterPro" id="IPR012340">
    <property type="entry name" value="NA-bd_OB-fold"/>
</dbReference>
<dbReference type="InterPro" id="IPR014722">
    <property type="entry name" value="Rib_uL2_dom2"/>
</dbReference>
<dbReference type="InterPro" id="IPR020599">
    <property type="entry name" value="Transl_elong_fac_P/YeiP"/>
</dbReference>
<dbReference type="InterPro" id="IPR013185">
    <property type="entry name" value="Transl_elong_KOW-like"/>
</dbReference>
<dbReference type="InterPro" id="IPR001059">
    <property type="entry name" value="Transl_elong_P/YeiP_cen"/>
</dbReference>
<dbReference type="InterPro" id="IPR013852">
    <property type="entry name" value="Transl_elong_P/YeiP_CS"/>
</dbReference>
<dbReference type="InterPro" id="IPR011768">
    <property type="entry name" value="Transl_elongation_fac_P"/>
</dbReference>
<dbReference type="InterPro" id="IPR008991">
    <property type="entry name" value="Translation_prot_SH3-like_sf"/>
</dbReference>
<dbReference type="NCBIfam" id="TIGR00038">
    <property type="entry name" value="efp"/>
    <property type="match status" value="1"/>
</dbReference>
<dbReference type="NCBIfam" id="NF001810">
    <property type="entry name" value="PRK00529.1"/>
    <property type="match status" value="1"/>
</dbReference>
<dbReference type="PANTHER" id="PTHR30053">
    <property type="entry name" value="ELONGATION FACTOR P"/>
    <property type="match status" value="1"/>
</dbReference>
<dbReference type="PANTHER" id="PTHR30053:SF12">
    <property type="entry name" value="ELONGATION FACTOR P (EF-P) FAMILY PROTEIN"/>
    <property type="match status" value="1"/>
</dbReference>
<dbReference type="Pfam" id="PF01132">
    <property type="entry name" value="EFP"/>
    <property type="match status" value="1"/>
</dbReference>
<dbReference type="Pfam" id="PF08207">
    <property type="entry name" value="EFP_N"/>
    <property type="match status" value="1"/>
</dbReference>
<dbReference type="Pfam" id="PF09285">
    <property type="entry name" value="Elong-fact-P_C"/>
    <property type="match status" value="1"/>
</dbReference>
<dbReference type="PIRSF" id="PIRSF005901">
    <property type="entry name" value="EF-P"/>
    <property type="match status" value="1"/>
</dbReference>
<dbReference type="SMART" id="SM01185">
    <property type="entry name" value="EFP"/>
    <property type="match status" value="1"/>
</dbReference>
<dbReference type="SMART" id="SM00841">
    <property type="entry name" value="Elong-fact-P_C"/>
    <property type="match status" value="1"/>
</dbReference>
<dbReference type="SUPFAM" id="SSF50249">
    <property type="entry name" value="Nucleic acid-binding proteins"/>
    <property type="match status" value="2"/>
</dbReference>
<dbReference type="SUPFAM" id="SSF50104">
    <property type="entry name" value="Translation proteins SH3-like domain"/>
    <property type="match status" value="1"/>
</dbReference>
<dbReference type="PROSITE" id="PS01275">
    <property type="entry name" value="EFP"/>
    <property type="match status" value="1"/>
</dbReference>
<reference key="1">
    <citation type="journal article" date="2008" name="Proc. Natl. Acad. Sci. U.S.A.">
        <title>The genome sequence of Bifidobacterium longum subsp. infantis reveals adaptations for milk utilization within the infant microbiome.</title>
        <authorList>
            <person name="Sela D.A."/>
            <person name="Chapman J."/>
            <person name="Adeuya A."/>
            <person name="Kim J.H."/>
            <person name="Chen F."/>
            <person name="Whitehead T.R."/>
            <person name="Lapidus A."/>
            <person name="Rokhsar D.S."/>
            <person name="Lebrilla C.B."/>
            <person name="German J.B."/>
            <person name="Price N.P."/>
            <person name="Richardson P.M."/>
            <person name="Mills D.A."/>
        </authorList>
    </citation>
    <scope>NUCLEOTIDE SEQUENCE [LARGE SCALE GENOMIC DNA]</scope>
    <source>
        <strain>ATCC 15697 / DSM 20088 / JCM 1222 / NCTC 11817 / S12</strain>
    </source>
</reference>
<reference key="2">
    <citation type="journal article" date="2011" name="Nature">
        <title>Bifidobacteria can protect from enteropathogenic infection through production of acetate.</title>
        <authorList>
            <person name="Fukuda S."/>
            <person name="Toh H."/>
            <person name="Hase K."/>
            <person name="Oshima K."/>
            <person name="Nakanishi Y."/>
            <person name="Yoshimura K."/>
            <person name="Tobe T."/>
            <person name="Clarke J.M."/>
            <person name="Topping D.L."/>
            <person name="Suzuki T."/>
            <person name="Taylor T.D."/>
            <person name="Itoh K."/>
            <person name="Kikuchi J."/>
            <person name="Morita H."/>
            <person name="Hattori M."/>
            <person name="Ohno H."/>
        </authorList>
    </citation>
    <scope>NUCLEOTIDE SEQUENCE [LARGE SCALE GENOMIC DNA]</scope>
    <source>
        <strain>ATCC 15697 / DSM 20088 / JCM 1222 / NCTC 11817 / S12</strain>
    </source>
</reference>
<accession>B7GPV9</accession>
<accession>E8MQR4</accession>
<protein>
    <recommendedName>
        <fullName evidence="1">Elongation factor P</fullName>
        <shortName evidence="1">EF-P</shortName>
    </recommendedName>
</protein>
<name>EFP_BIFLS</name>
<comment type="function">
    <text evidence="1">Involved in peptide bond synthesis. Stimulates efficient translation and peptide-bond synthesis on native or reconstituted 70S ribosomes in vitro. Probably functions indirectly by altering the affinity of the ribosome for aminoacyl-tRNA, thus increasing their reactivity as acceptors for peptidyl transferase.</text>
</comment>
<comment type="pathway">
    <text evidence="1">Protein biosynthesis; polypeptide chain elongation.</text>
</comment>
<comment type="subcellular location">
    <subcellularLocation>
        <location evidence="1">Cytoplasm</location>
    </subcellularLocation>
</comment>
<comment type="similarity">
    <text evidence="1">Belongs to the elongation factor P family.</text>
</comment>
<organism>
    <name type="scientific">Bifidobacterium longum subsp. infantis (strain ATCC 15697 / DSM 20088 / JCM 1222 / NCTC 11817 / S12)</name>
    <dbReference type="NCBI Taxonomy" id="391904"/>
    <lineage>
        <taxon>Bacteria</taxon>
        <taxon>Bacillati</taxon>
        <taxon>Actinomycetota</taxon>
        <taxon>Actinomycetes</taxon>
        <taxon>Bifidobacteriales</taxon>
        <taxon>Bifidobacteriaceae</taxon>
        <taxon>Bifidobacterium</taxon>
    </lineage>
</organism>
<feature type="chain" id="PRO_1000122992" description="Elongation factor P">
    <location>
        <begin position="1"/>
        <end position="188"/>
    </location>
</feature>
<evidence type="ECO:0000255" key="1">
    <source>
        <dbReference type="HAMAP-Rule" id="MF_00141"/>
    </source>
</evidence>